<gene>
    <name evidence="4" type="primary">TLE7</name>
</gene>
<protein>
    <recommendedName>
        <fullName evidence="3">Transducin-like enhancer protein 7</fullName>
    </recommendedName>
</protein>
<accession>A0A1W2PR48</accession>
<comment type="similarity">
    <text evidence="3">Belongs to the WD repeat Groucho/TLE family.</text>
</comment>
<evidence type="ECO:0000255" key="1"/>
<evidence type="ECO:0000256" key="2">
    <source>
        <dbReference type="SAM" id="MobiDB-lite"/>
    </source>
</evidence>
<evidence type="ECO:0000305" key="3"/>
<evidence type="ECO:0000312" key="4">
    <source>
        <dbReference type="HGNC" id="HGNC:53648"/>
    </source>
</evidence>
<sequence>MSGEKEEASLRMFGAYGEPEERRDVLESSGVSSQPEPQVQQQLGSLLGVPWQPPGPPIQHSPADQETSTVTQQQWHLQGLGRSELQAAGLPDAQPGEAAESSPSFLLGSEVGQPYSSSSPSEEVLSLLRAIPPIPDEVVVRQKRAPQGSWKVGTLFHGKRVYAVAISGSTHHVYTCGSGYIRVWDESALHAGEKAPRAQLDLQHPQDRVVTCKLFPDERSLITGGASQAVTLWDLAPTPQVRAQLTSTGPTCYSLAVSSDAHICLACFHGFVEIWDLQNQILIRKHEVPVYGSRCVDITGNIFWTGGEDTILYSWDLRSYQRLHQHNLQNEILSITHDPGEEWVLAGLRTSDIVFLHTRRNEQFKALMKKYTRHHSLKFASCGSYFVTAIDTRLSGLEAPSLQKLFQIEESSGILCCDVSSDNQYLVMGSSSSATIYQLLY</sequence>
<name>TLE7_HUMAN</name>
<reference key="1">
    <citation type="journal article" date="2004" name="Nature">
        <title>The sequence and analysis of duplication-rich human chromosome 16.</title>
        <authorList>
            <person name="Martin J."/>
            <person name="Han C."/>
            <person name="Gordon L.A."/>
            <person name="Terry A."/>
            <person name="Prabhakar S."/>
            <person name="She X."/>
            <person name="Xie G."/>
            <person name="Hellsten U."/>
            <person name="Chan Y.M."/>
            <person name="Altherr M."/>
            <person name="Couronne O."/>
            <person name="Aerts A."/>
            <person name="Bajorek E."/>
            <person name="Black S."/>
            <person name="Blumer H."/>
            <person name="Branscomb E."/>
            <person name="Brown N.C."/>
            <person name="Bruno W.J."/>
            <person name="Buckingham J.M."/>
            <person name="Callen D.F."/>
            <person name="Campbell C.S."/>
            <person name="Campbell M.L."/>
            <person name="Campbell E.W."/>
            <person name="Caoile C."/>
            <person name="Challacombe J.F."/>
            <person name="Chasteen L.A."/>
            <person name="Chertkov O."/>
            <person name="Chi H.C."/>
            <person name="Christensen M."/>
            <person name="Clark L.M."/>
            <person name="Cohn J.D."/>
            <person name="Denys M."/>
            <person name="Detter J.C."/>
            <person name="Dickson M."/>
            <person name="Dimitrijevic-Bussod M."/>
            <person name="Escobar J."/>
            <person name="Fawcett J.J."/>
            <person name="Flowers D."/>
            <person name="Fotopulos D."/>
            <person name="Glavina T."/>
            <person name="Gomez M."/>
            <person name="Gonzales E."/>
            <person name="Goodstein D."/>
            <person name="Goodwin L.A."/>
            <person name="Grady D.L."/>
            <person name="Grigoriev I."/>
            <person name="Groza M."/>
            <person name="Hammon N."/>
            <person name="Hawkins T."/>
            <person name="Haydu L."/>
            <person name="Hildebrand C.E."/>
            <person name="Huang W."/>
            <person name="Israni S."/>
            <person name="Jett J."/>
            <person name="Jewett P.B."/>
            <person name="Kadner K."/>
            <person name="Kimball H."/>
            <person name="Kobayashi A."/>
            <person name="Krawczyk M.-C."/>
            <person name="Leyba T."/>
            <person name="Longmire J.L."/>
            <person name="Lopez F."/>
            <person name="Lou Y."/>
            <person name="Lowry S."/>
            <person name="Ludeman T."/>
            <person name="Manohar C.F."/>
            <person name="Mark G.A."/>
            <person name="McMurray K.L."/>
            <person name="Meincke L.J."/>
            <person name="Morgan J."/>
            <person name="Moyzis R.K."/>
            <person name="Mundt M.O."/>
            <person name="Munk A.C."/>
            <person name="Nandkeshwar R.D."/>
            <person name="Pitluck S."/>
            <person name="Pollard M."/>
            <person name="Predki P."/>
            <person name="Parson-Quintana B."/>
            <person name="Ramirez L."/>
            <person name="Rash S."/>
            <person name="Retterer J."/>
            <person name="Ricke D.O."/>
            <person name="Robinson D.L."/>
            <person name="Rodriguez A."/>
            <person name="Salamov A."/>
            <person name="Saunders E.H."/>
            <person name="Scott D."/>
            <person name="Shough T."/>
            <person name="Stallings R.L."/>
            <person name="Stalvey M."/>
            <person name="Sutherland R.D."/>
            <person name="Tapia R."/>
            <person name="Tesmer J.G."/>
            <person name="Thayer N."/>
            <person name="Thompson L.S."/>
            <person name="Tice H."/>
            <person name="Torney D.C."/>
            <person name="Tran-Gyamfi M."/>
            <person name="Tsai M."/>
            <person name="Ulanovsky L.E."/>
            <person name="Ustaszewska A."/>
            <person name="Vo N."/>
            <person name="White P.S."/>
            <person name="Williams A.L."/>
            <person name="Wills P.L."/>
            <person name="Wu J.-R."/>
            <person name="Wu K."/>
            <person name="Yang J."/>
            <person name="DeJong P."/>
            <person name="Bruce D."/>
            <person name="Doggett N.A."/>
            <person name="Deaven L."/>
            <person name="Schmutz J."/>
            <person name="Grimwood J."/>
            <person name="Richardson P."/>
            <person name="Rokhsar D.S."/>
            <person name="Eichler E.E."/>
            <person name="Gilna P."/>
            <person name="Lucas S.M."/>
            <person name="Myers R.M."/>
            <person name="Rubin E.M."/>
            <person name="Pennacchio L.A."/>
        </authorList>
    </citation>
    <scope>NUCLEOTIDE SEQUENCE [LARGE SCALE GENOMIC DNA]</scope>
</reference>
<keyword id="KW-1267">Proteomics identification</keyword>
<keyword id="KW-1185">Reference proteome</keyword>
<keyword id="KW-0677">Repeat</keyword>
<keyword id="KW-0853">WD repeat</keyword>
<proteinExistence type="evidence at protein level"/>
<organism>
    <name type="scientific">Homo sapiens</name>
    <name type="common">Human</name>
    <dbReference type="NCBI Taxonomy" id="9606"/>
    <lineage>
        <taxon>Eukaryota</taxon>
        <taxon>Metazoa</taxon>
        <taxon>Chordata</taxon>
        <taxon>Craniata</taxon>
        <taxon>Vertebrata</taxon>
        <taxon>Euteleostomi</taxon>
        <taxon>Mammalia</taxon>
        <taxon>Eutheria</taxon>
        <taxon>Euarchontoglires</taxon>
        <taxon>Primates</taxon>
        <taxon>Haplorrhini</taxon>
        <taxon>Catarrhini</taxon>
        <taxon>Hominidae</taxon>
        <taxon>Homo</taxon>
    </lineage>
</organism>
<feature type="chain" id="PRO_0000443311" description="Transducin-like enhancer protein 7">
    <location>
        <begin position="1"/>
        <end position="441"/>
    </location>
</feature>
<feature type="repeat" description="WD 1" evidence="1">
    <location>
        <begin position="156"/>
        <end position="194"/>
    </location>
</feature>
<feature type="repeat" description="WD 2" evidence="1">
    <location>
        <begin position="204"/>
        <end position="243"/>
    </location>
</feature>
<feature type="repeat" description="WD 3" evidence="1">
    <location>
        <begin position="247"/>
        <end position="285"/>
    </location>
</feature>
<feature type="repeat" description="WD 4" evidence="1">
    <location>
        <begin position="286"/>
        <end position="325"/>
    </location>
</feature>
<feature type="repeat" description="WD 5" evidence="1">
    <location>
        <begin position="409"/>
        <end position="441"/>
    </location>
</feature>
<feature type="region of interest" description="Disordered" evidence="2">
    <location>
        <begin position="1"/>
        <end position="77"/>
    </location>
</feature>
<feature type="region of interest" description="Disordered" evidence="2">
    <location>
        <begin position="91"/>
        <end position="119"/>
    </location>
</feature>
<feature type="compositionally biased region" description="Low complexity" evidence="2">
    <location>
        <begin position="27"/>
        <end position="49"/>
    </location>
</feature>
<feature type="compositionally biased region" description="Polar residues" evidence="2">
    <location>
        <begin position="62"/>
        <end position="76"/>
    </location>
</feature>
<feature type="compositionally biased region" description="Low complexity" evidence="2">
    <location>
        <begin position="108"/>
        <end position="119"/>
    </location>
</feature>
<dbReference type="EMBL" id="AC010547">
    <property type="status" value="NOT_ANNOTATED_CDS"/>
    <property type="molecule type" value="Genomic_DNA"/>
</dbReference>
<dbReference type="CCDS" id="CCDS92193.1"/>
<dbReference type="RefSeq" id="NP_001354294.1">
    <property type="nucleotide sequence ID" value="NM_001367365.2"/>
</dbReference>
<dbReference type="SMR" id="A0A1W2PR48"/>
<dbReference type="FunCoup" id="A0A1W2PR48">
    <property type="interactions" value="116"/>
</dbReference>
<dbReference type="IntAct" id="A0A1W2PR48">
    <property type="interactions" value="1"/>
</dbReference>
<dbReference type="STRING" id="9606.ENSP00000492311"/>
<dbReference type="GlyGen" id="A0A1W2PR48">
    <property type="glycosylation" value="1 site"/>
</dbReference>
<dbReference type="BioMuta" id="ENSG00000260734"/>
<dbReference type="MassIVE" id="A0A1W2PR48"/>
<dbReference type="PeptideAtlas" id="A0A1W2PR48"/>
<dbReference type="Ensembl" id="ENST00000561754.4">
    <property type="protein sequence ID" value="ENSP00000492311.2"/>
    <property type="gene ID" value="ENSG00000260734.6"/>
</dbReference>
<dbReference type="GeneID" id="102723796"/>
<dbReference type="MANE-Select" id="ENST00000561754.4">
    <property type="protein sequence ID" value="ENSP00000492311.2"/>
    <property type="RefSeq nucleotide sequence ID" value="NM_001367365.2"/>
    <property type="RefSeq protein sequence ID" value="NP_001354294.1"/>
</dbReference>
<dbReference type="AGR" id="HGNC:53648"/>
<dbReference type="GeneCards" id="TLE7"/>
<dbReference type="HGNC" id="HGNC:53648">
    <property type="gene designation" value="TLE7"/>
</dbReference>
<dbReference type="HPA" id="ENSG00000260734">
    <property type="expression patterns" value="Not detected"/>
</dbReference>
<dbReference type="neXtProt" id="NX_A0A1W2PR48"/>
<dbReference type="VEuPathDB" id="HostDB:ENSG00000260734"/>
<dbReference type="GeneTree" id="ENSGT01030000234519"/>
<dbReference type="InParanoid" id="A0A1W2PR48"/>
<dbReference type="OMA" id="LACFKGF"/>
<dbReference type="OrthoDB" id="273771at2759"/>
<dbReference type="PAN-GO" id="A0A1W2PR48">
    <property type="GO annotations" value="4 GO annotations based on evolutionary models"/>
</dbReference>
<dbReference type="Pharos" id="A0A1W2PR48">
    <property type="development level" value="Tdark"/>
</dbReference>
<dbReference type="PRO" id="PR:A0A1W2PR48"/>
<dbReference type="Proteomes" id="UP000005640">
    <property type="component" value="Chromosome 16"/>
</dbReference>
<dbReference type="RNAct" id="A0A1W2PR48">
    <property type="molecule type" value="protein"/>
</dbReference>
<dbReference type="Bgee" id="ENSG00000260734">
    <property type="expression patterns" value="Expressed in primordial germ cell in gonad and 3 other cell types or tissues"/>
</dbReference>
<dbReference type="GO" id="GO:0005634">
    <property type="term" value="C:nucleus"/>
    <property type="evidence" value="ECO:0000318"/>
    <property type="project" value="GO_Central"/>
</dbReference>
<dbReference type="GO" id="GO:0005667">
    <property type="term" value="C:transcription regulator complex"/>
    <property type="evidence" value="ECO:0000318"/>
    <property type="project" value="GO_Central"/>
</dbReference>
<dbReference type="GO" id="GO:0003714">
    <property type="term" value="F:transcription corepressor activity"/>
    <property type="evidence" value="ECO:0000318"/>
    <property type="project" value="GO_Central"/>
</dbReference>
<dbReference type="GO" id="GO:0090090">
    <property type="term" value="P:negative regulation of canonical Wnt signaling pathway"/>
    <property type="evidence" value="ECO:0000318"/>
    <property type="project" value="GO_Central"/>
</dbReference>
<dbReference type="FunFam" id="2.130.10.10:FF:000915">
    <property type="entry name" value="TLE family member 7"/>
    <property type="match status" value="1"/>
</dbReference>
<dbReference type="Gene3D" id="2.130.10.10">
    <property type="entry name" value="YVTN repeat-like/Quinoprotein amine dehydrogenase"/>
    <property type="match status" value="1"/>
</dbReference>
<dbReference type="InterPro" id="IPR009146">
    <property type="entry name" value="Groucho_enhance"/>
</dbReference>
<dbReference type="InterPro" id="IPR015943">
    <property type="entry name" value="WD40/YVTN_repeat-like_dom_sf"/>
</dbReference>
<dbReference type="InterPro" id="IPR036322">
    <property type="entry name" value="WD40_repeat_dom_sf"/>
</dbReference>
<dbReference type="InterPro" id="IPR001680">
    <property type="entry name" value="WD40_rpt"/>
</dbReference>
<dbReference type="PANTHER" id="PTHR10814">
    <property type="entry name" value="TRANSDUCIN-LIKE ENHANCER PROTEIN"/>
    <property type="match status" value="1"/>
</dbReference>
<dbReference type="PANTHER" id="PTHR10814:SF33">
    <property type="entry name" value="TRANSDUCIN-LIKE ENHANCER PROTEIN 7"/>
    <property type="match status" value="1"/>
</dbReference>
<dbReference type="Pfam" id="PF00400">
    <property type="entry name" value="WD40"/>
    <property type="match status" value="1"/>
</dbReference>
<dbReference type="PRINTS" id="PR01850">
    <property type="entry name" value="GROUCHOFAMLY"/>
</dbReference>
<dbReference type="SMART" id="SM00320">
    <property type="entry name" value="WD40"/>
    <property type="match status" value="5"/>
</dbReference>
<dbReference type="SUPFAM" id="SSF50978">
    <property type="entry name" value="WD40 repeat-like"/>
    <property type="match status" value="1"/>
</dbReference>
<dbReference type="PROSITE" id="PS50082">
    <property type="entry name" value="WD_REPEATS_2"/>
    <property type="match status" value="1"/>
</dbReference>
<dbReference type="PROSITE" id="PS50294">
    <property type="entry name" value="WD_REPEATS_REGION"/>
    <property type="match status" value="1"/>
</dbReference>